<comment type="function">
    <text evidence="2">Sodium-independent organic anion transporter, exhibits high specificity for sulfated conjugates of xenobiotics and steroid hormones such as estrone 3-sulfate (E1S) and dehydroepiandrosterone sulfate (DHEAS). Can transport the statin pravastatin and may contribute to its disposition into the hepatocytes when the function of OATPs is compromised. It is specifically activated by 3 to 5 carbons-containing short-chain fatty acids/SCFAs, including propionate (propanoate), butyrate (butanoate) and valerate (pentanoate). May operate the exchange of sulfated organic components against short-chain fatty acids/SCFAs, in particular butanoate, at the sinusoidal membrane of hepatocytes.</text>
</comment>
<comment type="catalytic activity">
    <reaction evidence="2">
        <text>butanoate(out) + estrone 3-sulfate(in) = butanoate(in) + estrone 3-sulfate(out)</text>
        <dbReference type="Rhea" id="RHEA:72051"/>
        <dbReference type="ChEBI" id="CHEBI:17968"/>
        <dbReference type="ChEBI" id="CHEBI:60050"/>
    </reaction>
</comment>
<comment type="catalytic activity">
    <reaction evidence="2">
        <text>propanoate(in) + estrone 3-sulfate(out) = propanoate(out) + estrone 3-sulfate(in)</text>
        <dbReference type="Rhea" id="RHEA:72555"/>
        <dbReference type="ChEBI" id="CHEBI:17272"/>
        <dbReference type="ChEBI" id="CHEBI:60050"/>
    </reaction>
</comment>
<comment type="catalytic activity">
    <reaction evidence="2">
        <text>pentanoate(in) + estrone 3-sulfate(out) = pentanoate(out) + estrone 3-sulfate(in)</text>
        <dbReference type="Rhea" id="RHEA:72559"/>
        <dbReference type="ChEBI" id="CHEBI:31011"/>
        <dbReference type="ChEBI" id="CHEBI:60050"/>
    </reaction>
</comment>
<comment type="catalytic activity">
    <reaction evidence="2">
        <text>dehydroepiandrosterone 3-sulfate(in) + butanoate(out) = dehydroepiandrosterone 3-sulfate(out) + butanoate(in)</text>
        <dbReference type="Rhea" id="RHEA:72563"/>
        <dbReference type="ChEBI" id="CHEBI:17968"/>
        <dbReference type="ChEBI" id="CHEBI:57905"/>
    </reaction>
</comment>
<comment type="catalytic activity">
    <reaction evidence="2">
        <text>propanoate(out) + dehydroepiandrosterone 3-sulfate(in) = propanoate(in) + dehydroepiandrosterone 3-sulfate(out)</text>
        <dbReference type="Rhea" id="RHEA:72567"/>
        <dbReference type="ChEBI" id="CHEBI:17272"/>
        <dbReference type="ChEBI" id="CHEBI:57905"/>
    </reaction>
</comment>
<comment type="catalytic activity">
    <reaction evidence="2">
        <text>pentanoate(out) + dehydroepiandrosterone 3-sulfate(in) = pentanoate(in) + dehydroepiandrosterone 3-sulfate(out)</text>
        <dbReference type="Rhea" id="RHEA:72571"/>
        <dbReference type="ChEBI" id="CHEBI:31011"/>
        <dbReference type="ChEBI" id="CHEBI:57905"/>
    </reaction>
</comment>
<comment type="subcellular location">
    <subcellularLocation>
        <location evidence="1">Basolateral cell membrane</location>
        <topology evidence="1">Multi-pass membrane protein</topology>
    </subcellularLocation>
    <text evidence="1">Enriched at the sinusoidal part of the plasma membrane.</text>
</comment>
<comment type="similarity">
    <text evidence="5">Belongs to the major facilitator (TC 2.A.1) superfamily. Organic cation transporter (TC 2.A.1.19) family.</text>
</comment>
<accession>Q2KIV1</accession>
<organism>
    <name type="scientific">Bos taurus</name>
    <name type="common">Bovine</name>
    <dbReference type="NCBI Taxonomy" id="9913"/>
    <lineage>
        <taxon>Eukaryota</taxon>
        <taxon>Metazoa</taxon>
        <taxon>Chordata</taxon>
        <taxon>Craniata</taxon>
        <taxon>Vertebrata</taxon>
        <taxon>Euteleostomi</taxon>
        <taxon>Mammalia</taxon>
        <taxon>Eutheria</taxon>
        <taxon>Laurasiatheria</taxon>
        <taxon>Artiodactyla</taxon>
        <taxon>Ruminantia</taxon>
        <taxon>Pecora</taxon>
        <taxon>Bovidae</taxon>
        <taxon>Bovinae</taxon>
        <taxon>Bos</taxon>
    </lineage>
</organism>
<evidence type="ECO:0000250" key="1"/>
<evidence type="ECO:0000250" key="2">
    <source>
        <dbReference type="UniProtKB" id="Q8IVM8"/>
    </source>
</evidence>
<evidence type="ECO:0000255" key="3"/>
<evidence type="ECO:0000256" key="4">
    <source>
        <dbReference type="SAM" id="MobiDB-lite"/>
    </source>
</evidence>
<evidence type="ECO:0000305" key="5"/>
<feature type="chain" id="PRO_0000317528" description="Organic anion transporter 7">
    <location>
        <begin position="1"/>
        <end position="552"/>
    </location>
</feature>
<feature type="topological domain" description="Cytoplasmic" evidence="3">
    <location>
        <begin position="1"/>
        <end position="15"/>
    </location>
</feature>
<feature type="transmembrane region" description="Helical" evidence="3">
    <location>
        <begin position="16"/>
        <end position="36"/>
    </location>
</feature>
<feature type="topological domain" description="Extracellular" evidence="3">
    <location>
        <begin position="37"/>
        <end position="143"/>
    </location>
</feature>
<feature type="transmembrane region" description="Helical" evidence="3">
    <location>
        <begin position="144"/>
        <end position="164"/>
    </location>
</feature>
<feature type="topological domain" description="Cytoplasmic" evidence="3">
    <location>
        <begin position="165"/>
        <end position="177"/>
    </location>
</feature>
<feature type="transmembrane region" description="Helical" evidence="3">
    <location>
        <begin position="178"/>
        <end position="198"/>
    </location>
</feature>
<feature type="topological domain" description="Extracellular" evidence="3">
    <location>
        <begin position="199"/>
        <end position="203"/>
    </location>
</feature>
<feature type="transmembrane region" description="Helical" evidence="3">
    <location>
        <begin position="204"/>
        <end position="224"/>
    </location>
</feature>
<feature type="topological domain" description="Cytoplasmic" evidence="3">
    <location>
        <begin position="225"/>
        <end position="233"/>
    </location>
</feature>
<feature type="transmembrane region" description="Helical" evidence="3">
    <location>
        <begin position="234"/>
        <end position="254"/>
    </location>
</feature>
<feature type="topological domain" description="Extracellular" evidence="3">
    <location>
        <begin position="255"/>
        <end position="259"/>
    </location>
</feature>
<feature type="transmembrane region" description="Helical" evidence="3">
    <location>
        <begin position="260"/>
        <end position="280"/>
    </location>
</feature>
<feature type="topological domain" description="Cytoplasmic" evidence="3">
    <location>
        <begin position="281"/>
        <end position="349"/>
    </location>
</feature>
<feature type="transmembrane region" description="Helical" evidence="3">
    <location>
        <begin position="350"/>
        <end position="368"/>
    </location>
</feature>
<feature type="topological domain" description="Extracellular" evidence="3">
    <location>
        <begin position="369"/>
        <end position="377"/>
    </location>
</feature>
<feature type="transmembrane region" description="Helical" evidence="3">
    <location>
        <begin position="378"/>
        <end position="398"/>
    </location>
</feature>
<feature type="topological domain" description="Cytoplasmic" evidence="3">
    <location>
        <begin position="399"/>
        <end position="406"/>
    </location>
</feature>
<feature type="transmembrane region" description="Helical" evidence="3">
    <location>
        <begin position="407"/>
        <end position="427"/>
    </location>
</feature>
<feature type="topological domain" description="Extracellular" evidence="3">
    <location>
        <begin position="428"/>
        <end position="435"/>
    </location>
</feature>
<feature type="transmembrane region" description="Helical" evidence="3">
    <location>
        <begin position="436"/>
        <end position="456"/>
    </location>
</feature>
<feature type="topological domain" description="Cytoplasmic" evidence="3">
    <location>
        <begin position="457"/>
        <end position="468"/>
    </location>
</feature>
<feature type="transmembrane region" description="Helical" evidence="3">
    <location>
        <begin position="469"/>
        <end position="489"/>
    </location>
</feature>
<feature type="topological domain" description="Extracellular" evidence="3">
    <location>
        <begin position="490"/>
        <end position="494"/>
    </location>
</feature>
<feature type="transmembrane region" description="Helical" evidence="3">
    <location>
        <begin position="495"/>
        <end position="515"/>
    </location>
</feature>
<feature type="topological domain" description="Cytoplasmic" evidence="3">
    <location>
        <begin position="516"/>
        <end position="552"/>
    </location>
</feature>
<feature type="region of interest" description="Disordered" evidence="4">
    <location>
        <begin position="525"/>
        <end position="552"/>
    </location>
</feature>
<feature type="compositionally biased region" description="Basic and acidic residues" evidence="4">
    <location>
        <begin position="529"/>
        <end position="542"/>
    </location>
</feature>
<feature type="glycosylation site" description="N-linked (GlcNAc...) asparagine" evidence="3">
    <location>
        <position position="39"/>
    </location>
</feature>
<feature type="glycosylation site" description="N-linked (GlcNAc...) asparagine" evidence="3">
    <location>
        <position position="56"/>
    </location>
</feature>
<feature type="glycosylation site" description="N-linked (GlcNAc...) asparagine" evidence="3">
    <location>
        <position position="62"/>
    </location>
</feature>
<feature type="glycosylation site" description="N-linked (GlcNAc...) asparagine" evidence="3">
    <location>
        <position position="102"/>
    </location>
</feature>
<feature type="glycosylation site" description="N-linked (GlcNAc...) asparagine" evidence="3">
    <location>
        <position position="107"/>
    </location>
</feature>
<dbReference type="EMBL" id="BC112499">
    <property type="protein sequence ID" value="AAI12500.1"/>
    <property type="molecule type" value="mRNA"/>
</dbReference>
<dbReference type="RefSeq" id="NP_001039471.1">
    <property type="nucleotide sequence ID" value="NM_001046006.2"/>
</dbReference>
<dbReference type="SMR" id="Q2KIV1"/>
<dbReference type="FunCoup" id="Q2KIV1">
    <property type="interactions" value="63"/>
</dbReference>
<dbReference type="STRING" id="9913.ENSBTAP00000025892"/>
<dbReference type="GlyCosmos" id="Q2KIV1">
    <property type="glycosylation" value="5 sites, No reported glycans"/>
</dbReference>
<dbReference type="GlyGen" id="Q2KIV1">
    <property type="glycosylation" value="5 sites"/>
</dbReference>
<dbReference type="PaxDb" id="9913-ENSBTAP00000025892"/>
<dbReference type="Ensembl" id="ENSBTAT00000025892.5">
    <property type="protein sequence ID" value="ENSBTAP00000025892.5"/>
    <property type="gene ID" value="ENSBTAG00000039463.3"/>
</dbReference>
<dbReference type="GeneID" id="508494"/>
<dbReference type="KEGG" id="bta:508494"/>
<dbReference type="CTD" id="114571"/>
<dbReference type="VEuPathDB" id="HostDB:ENSBTAG00000039463"/>
<dbReference type="eggNOG" id="KOG0255">
    <property type="taxonomic scope" value="Eukaryota"/>
</dbReference>
<dbReference type="GeneTree" id="ENSGT00940000161239"/>
<dbReference type="InParanoid" id="Q2KIV1"/>
<dbReference type="OMA" id="CAACMGQ"/>
<dbReference type="OrthoDB" id="2544694at2759"/>
<dbReference type="Proteomes" id="UP000009136">
    <property type="component" value="Chromosome 29"/>
</dbReference>
<dbReference type="Bgee" id="ENSBTAG00000039463">
    <property type="expression patterns" value="Expressed in liver and 19 other cell types or tissues"/>
</dbReference>
<dbReference type="GO" id="GO:0016323">
    <property type="term" value="C:basolateral plasma membrane"/>
    <property type="evidence" value="ECO:0000250"/>
    <property type="project" value="UniProtKB"/>
</dbReference>
<dbReference type="GO" id="GO:0008514">
    <property type="term" value="F:organic anion transmembrane transporter activity"/>
    <property type="evidence" value="ECO:0000250"/>
    <property type="project" value="UniProtKB"/>
</dbReference>
<dbReference type="GO" id="GO:0015636">
    <property type="term" value="F:short-chain fatty acid transmembrane transporter activity"/>
    <property type="evidence" value="ECO:0000250"/>
    <property type="project" value="UniProtKB"/>
</dbReference>
<dbReference type="GO" id="GO:0015347">
    <property type="term" value="F:sodium-independent organic anion transmembrane transporter activity"/>
    <property type="evidence" value="ECO:0000250"/>
    <property type="project" value="UniProtKB"/>
</dbReference>
<dbReference type="GO" id="GO:0009914">
    <property type="term" value="P:hormone transport"/>
    <property type="evidence" value="ECO:0000250"/>
    <property type="project" value="UniProtKB"/>
</dbReference>
<dbReference type="GO" id="GO:0015711">
    <property type="term" value="P:organic anion transport"/>
    <property type="evidence" value="ECO:0000318"/>
    <property type="project" value="GO_Central"/>
</dbReference>
<dbReference type="GO" id="GO:0015913">
    <property type="term" value="P:short-chain fatty acid transmembrane transport"/>
    <property type="evidence" value="ECO:0000250"/>
    <property type="project" value="UniProtKB"/>
</dbReference>
<dbReference type="GO" id="GO:0043252">
    <property type="term" value="P:sodium-independent organic anion transport"/>
    <property type="evidence" value="ECO:0000250"/>
    <property type="project" value="UniProtKB"/>
</dbReference>
<dbReference type="CDD" id="cd17374">
    <property type="entry name" value="MFS_OAT"/>
    <property type="match status" value="1"/>
</dbReference>
<dbReference type="FunFam" id="1.20.1250.20:FF:000023">
    <property type="entry name" value="Solute carrier family 22 member 6"/>
    <property type="match status" value="1"/>
</dbReference>
<dbReference type="Gene3D" id="1.20.1250.20">
    <property type="entry name" value="MFS general substrate transporter like domains"/>
    <property type="match status" value="1"/>
</dbReference>
<dbReference type="InterPro" id="IPR011701">
    <property type="entry name" value="MFS"/>
</dbReference>
<dbReference type="InterPro" id="IPR020846">
    <property type="entry name" value="MFS_dom"/>
</dbReference>
<dbReference type="InterPro" id="IPR036259">
    <property type="entry name" value="MFS_trans_sf"/>
</dbReference>
<dbReference type="PANTHER" id="PTHR24064">
    <property type="entry name" value="SOLUTE CARRIER FAMILY 22 MEMBER"/>
    <property type="match status" value="1"/>
</dbReference>
<dbReference type="Pfam" id="PF07690">
    <property type="entry name" value="MFS_1"/>
    <property type="match status" value="1"/>
</dbReference>
<dbReference type="SUPFAM" id="SSF103473">
    <property type="entry name" value="MFS general substrate transporter"/>
    <property type="match status" value="1"/>
</dbReference>
<dbReference type="PROSITE" id="PS50850">
    <property type="entry name" value="MFS"/>
    <property type="match status" value="1"/>
</dbReference>
<name>S22A9_BOVIN</name>
<sequence length="552" mass="61540">MAFQDLLDQVGGLGRFQILQMLLLCISSLITYPHILLENFTAAVPGHQCWVHILNNNTDSANATGTLSPDALLRISIPLDSNLRPEKCRRFSRPQWQLLNLNRTFPNITDLDTESCVDGWVYDQSIFTSTIVTEWDLVCESQSLKSMAKFLFMAGMLVGSIVYGHLSDRFGRRLIFRCCLLQLAITDTSAAFAPTYLIYCSLRFLAGFSTMSILTNCTVLIVEWTVPRFQVMGMTLSICAACLGQIILGGLAFAIRDWHTLQLVFSVPLFVLFLSSRWLAESARWLIITNRPEEGLKELKKAAHRNGRKNAGDALTMEVLRSAMQEELEAAQIKSSVFDLFRTPNLRKRICLLSFVRFANFMSFFGLILHLQYMGSNVFLFQVLFGAVNLPANCVAFWALNHLGRQVSQTLFLFLLGISILAITFVPQEMQTLRMAVSALGIAVSSVTLMCSFAHGNELTPTVLRVTASGFLGIASNIGAALAPLLMILTVYSPHLPWIIYGVCSILGGLVVPLLPETRNKPLPDSIQEVEKERKDSRKAKPEGTFMKVTQF</sequence>
<gene>
    <name type="primary">SLC22A9</name>
</gene>
<proteinExistence type="evidence at transcript level"/>
<protein>
    <recommendedName>
        <fullName>Organic anion transporter 7</fullName>
        <shortName>bOAT7</shortName>
    </recommendedName>
    <alternativeName>
        <fullName>Organic anion/short-chain fatty acid exchanger</fullName>
    </alternativeName>
    <alternativeName>
        <fullName>Solute carrier family 22 member 9</fullName>
    </alternativeName>
</protein>
<keyword id="KW-1003">Cell membrane</keyword>
<keyword id="KW-0325">Glycoprotein</keyword>
<keyword id="KW-0445">Lipid transport</keyword>
<keyword id="KW-0472">Membrane</keyword>
<keyword id="KW-1185">Reference proteome</keyword>
<keyword id="KW-0812">Transmembrane</keyword>
<keyword id="KW-1133">Transmembrane helix</keyword>
<keyword id="KW-0813">Transport</keyword>
<reference key="1">
    <citation type="submission" date="2006-01" db="EMBL/GenBank/DDBJ databases">
        <authorList>
            <consortium name="NIH - Mammalian Gene Collection (MGC) project"/>
        </authorList>
    </citation>
    <scope>NUCLEOTIDE SEQUENCE [LARGE SCALE MRNA]</scope>
    <source>
        <strain>Hereford</strain>
        <tissue>Testis</tissue>
    </source>
</reference>